<sequence length="362" mass="41678">MKNFETMAEQYKTLPCVGQLNDGLLRELKNLCRFTDFPGIRLLTERHRNECLSLIWPKNLWLRLAQPVDVAGYSEQQLAELNDHYQGFKENLCLIGAIQIGRKDVPIFVGKSSRIFCHDLEDDVLYYIAEDFDKFVRFGILGTNVITCSEPVYTRFYYDGPKFEKLETLKDLGLLQEPLNLNSSLRFNRKTALALKALRRNYISMLSELDELARCKTLAEIEHFVSINTGLKLRLETPIFTALILQDRKNIHCGTSDQKRFEEQEALFEKVVVLGFLNISAEDYGLRPILCIGETGAIYYYDWIDKVLTRIADCLLTFARIGFARYCGDFGYDKIGKVTARFGRLSTLGSAPVQQYSWYLSK</sequence>
<keyword id="KW-1185">Reference proteome</keyword>
<comment type="similarity">
    <text evidence="1">Belongs to the herpesviridae US22 family.</text>
</comment>
<organism>
    <name type="scientific">Human herpesvirus 7 (strain JI)</name>
    <name type="common">HHV-7</name>
    <name type="synonym">Human T lymphotropic virus</name>
    <dbReference type="NCBI Taxonomy" id="57278"/>
    <lineage>
        <taxon>Viruses</taxon>
        <taxon>Duplodnaviria</taxon>
        <taxon>Heunggongvirae</taxon>
        <taxon>Peploviricota</taxon>
        <taxon>Herviviricetes</taxon>
        <taxon>Herpesvirales</taxon>
        <taxon>Orthoherpesviridae</taxon>
        <taxon>Betaherpesvirinae</taxon>
        <taxon>Roseolovirus</taxon>
        <taxon>Roseolovirus humanbeta7</taxon>
        <taxon>Human betaherpesvirus 7</taxon>
    </lineage>
</organism>
<accession>P52523</accession>
<feature type="chain" id="PRO_0000116316" description="Protein U8">
    <location>
        <begin position="1"/>
        <end position="362"/>
    </location>
</feature>
<evidence type="ECO:0000305" key="1"/>
<gene>
    <name type="primary">U8</name>
</gene>
<dbReference type="EMBL" id="U43400">
    <property type="protein sequence ID" value="AAC54670.1"/>
    <property type="molecule type" value="Genomic_DNA"/>
</dbReference>
<dbReference type="PIR" id="T41910">
    <property type="entry name" value="T41910"/>
</dbReference>
<dbReference type="Proteomes" id="UP000009246">
    <property type="component" value="Segment"/>
</dbReference>
<dbReference type="InterPro" id="IPR003360">
    <property type="entry name" value="US22-like"/>
</dbReference>
<dbReference type="Pfam" id="PF02393">
    <property type="entry name" value="US22"/>
    <property type="match status" value="2"/>
</dbReference>
<protein>
    <recommendedName>
        <fullName>Protein U8</fullName>
    </recommendedName>
</protein>
<reference key="1">
    <citation type="journal article" date="1996" name="J. Virol.">
        <title>Determination and analysis of the complete nucleotide sequence of human herpesvirus.</title>
        <authorList>
            <person name="Nicholas J."/>
        </authorList>
    </citation>
    <scope>NUCLEOTIDE SEQUENCE [LARGE SCALE GENOMIC DNA]</scope>
</reference>
<name>VU8_HHV7J</name>
<proteinExistence type="inferred from homology"/>
<organismHost>
    <name type="scientific">Homo sapiens</name>
    <name type="common">Human</name>
    <dbReference type="NCBI Taxonomy" id="9606"/>
</organismHost>